<keyword id="KW-0963">Cytoplasm</keyword>
<keyword id="KW-0227">DNA damage</keyword>
<keyword id="KW-0234">DNA repair</keyword>
<keyword id="KW-1185">Reference proteome</keyword>
<keyword id="KW-0742">SOS response</keyword>
<proteinExistence type="inferred from homology"/>
<protein>
    <recommendedName>
        <fullName>Regulatory protein RecX</fullName>
    </recommendedName>
</protein>
<dbReference type="EMBL" id="AE014075">
    <property type="protein sequence ID" value="AAN81703.1"/>
    <property type="molecule type" value="Genomic_DNA"/>
</dbReference>
<dbReference type="RefSeq" id="WP_000140506.1">
    <property type="nucleotide sequence ID" value="NZ_CP051263.1"/>
</dbReference>
<dbReference type="SMR" id="P65999"/>
<dbReference type="STRING" id="199310.c3252"/>
<dbReference type="GeneID" id="75172780"/>
<dbReference type="KEGG" id="ecc:c3252"/>
<dbReference type="eggNOG" id="COG2137">
    <property type="taxonomic scope" value="Bacteria"/>
</dbReference>
<dbReference type="HOGENOM" id="CLU_066607_3_2_6"/>
<dbReference type="BioCyc" id="ECOL199310:C3252-MONOMER"/>
<dbReference type="Proteomes" id="UP000001410">
    <property type="component" value="Chromosome"/>
</dbReference>
<dbReference type="GO" id="GO:0005737">
    <property type="term" value="C:cytoplasm"/>
    <property type="evidence" value="ECO:0007669"/>
    <property type="project" value="UniProtKB-SubCell"/>
</dbReference>
<dbReference type="GO" id="GO:0006281">
    <property type="term" value="P:DNA repair"/>
    <property type="evidence" value="ECO:0007669"/>
    <property type="project" value="UniProtKB-KW"/>
</dbReference>
<dbReference type="GO" id="GO:0006282">
    <property type="term" value="P:regulation of DNA repair"/>
    <property type="evidence" value="ECO:0007669"/>
    <property type="project" value="UniProtKB-UniRule"/>
</dbReference>
<dbReference type="GO" id="GO:0009432">
    <property type="term" value="P:SOS response"/>
    <property type="evidence" value="ECO:0007669"/>
    <property type="project" value="UniProtKB-KW"/>
</dbReference>
<dbReference type="FunFam" id="1.10.10.10:FF:000133">
    <property type="entry name" value="Regulatory protein RecX"/>
    <property type="match status" value="1"/>
</dbReference>
<dbReference type="FunFam" id="1.10.10.10:FF:000134">
    <property type="entry name" value="Regulatory protein RecX"/>
    <property type="match status" value="1"/>
</dbReference>
<dbReference type="FunFam" id="1.10.10.10:FF:000209">
    <property type="entry name" value="Regulatory protein RecX"/>
    <property type="match status" value="1"/>
</dbReference>
<dbReference type="Gene3D" id="1.10.10.10">
    <property type="entry name" value="Winged helix-like DNA-binding domain superfamily/Winged helix DNA-binding domain"/>
    <property type="match status" value="3"/>
</dbReference>
<dbReference type="HAMAP" id="MF_01114">
    <property type="entry name" value="RecX"/>
    <property type="match status" value="1"/>
</dbReference>
<dbReference type="InterPro" id="IPR053926">
    <property type="entry name" value="RecX_HTH_1st"/>
</dbReference>
<dbReference type="InterPro" id="IPR053924">
    <property type="entry name" value="RecX_HTH_2nd"/>
</dbReference>
<dbReference type="InterPro" id="IPR053925">
    <property type="entry name" value="RecX_HTH_3rd"/>
</dbReference>
<dbReference type="InterPro" id="IPR003783">
    <property type="entry name" value="Regulatory_RecX"/>
</dbReference>
<dbReference type="InterPro" id="IPR036388">
    <property type="entry name" value="WH-like_DNA-bd_sf"/>
</dbReference>
<dbReference type="NCBIfam" id="NF001052">
    <property type="entry name" value="PRK00117.1-1"/>
    <property type="match status" value="1"/>
</dbReference>
<dbReference type="PANTHER" id="PTHR33602">
    <property type="entry name" value="REGULATORY PROTEIN RECX FAMILY PROTEIN"/>
    <property type="match status" value="1"/>
</dbReference>
<dbReference type="PANTHER" id="PTHR33602:SF1">
    <property type="entry name" value="REGULATORY PROTEIN RECX FAMILY PROTEIN"/>
    <property type="match status" value="1"/>
</dbReference>
<dbReference type="Pfam" id="PF21982">
    <property type="entry name" value="RecX_HTH1"/>
    <property type="match status" value="1"/>
</dbReference>
<dbReference type="Pfam" id="PF02631">
    <property type="entry name" value="RecX_HTH2"/>
    <property type="match status" value="1"/>
</dbReference>
<dbReference type="Pfam" id="PF21981">
    <property type="entry name" value="RecX_HTH3"/>
    <property type="match status" value="1"/>
</dbReference>
<sequence>MTESTSRRPAYARLLDRAVRILAVRDHSEQELRRKLAAPIMGKNGPEEIDATAEDYERVIAWCHEHGYLDDSRFVARFIASRSRKGYGPARIRQELNQKGISREATEKAMRECDIDWCALARDQATRKYGEPLPTVFSEKVKIQRFLLYRGYLMEDIQDIWRNFAD</sequence>
<accession>P65999</accession>
<accession>P59208</accession>
<accession>Q8X875</accession>
<comment type="function">
    <text evidence="1">Modulates RecA activity through direct physical interaction. Can inhibit both RecA recombinase and coprotease activities. May have a regulatory role during the SOS response. Inhibits DNA strand exchange in vitro (By similarity).</text>
</comment>
<comment type="subcellular location">
    <subcellularLocation>
        <location evidence="2">Cytoplasm</location>
    </subcellularLocation>
</comment>
<comment type="similarity">
    <text evidence="2">Belongs to the RecX family.</text>
</comment>
<name>RECX_ECOL6</name>
<gene>
    <name type="primary">recX</name>
    <name type="ordered locus">c3252</name>
</gene>
<feature type="chain" id="PRO_0000162430" description="Regulatory protein RecX">
    <location>
        <begin position="1"/>
        <end position="166"/>
    </location>
</feature>
<reference key="1">
    <citation type="journal article" date="2002" name="Proc. Natl. Acad. Sci. U.S.A.">
        <title>Extensive mosaic structure revealed by the complete genome sequence of uropathogenic Escherichia coli.</title>
        <authorList>
            <person name="Welch R.A."/>
            <person name="Burland V."/>
            <person name="Plunkett G. III"/>
            <person name="Redford P."/>
            <person name="Roesch P."/>
            <person name="Rasko D."/>
            <person name="Buckles E.L."/>
            <person name="Liou S.-R."/>
            <person name="Boutin A."/>
            <person name="Hackett J."/>
            <person name="Stroud D."/>
            <person name="Mayhew G.F."/>
            <person name="Rose D.J."/>
            <person name="Zhou S."/>
            <person name="Schwartz D.C."/>
            <person name="Perna N.T."/>
            <person name="Mobley H.L.T."/>
            <person name="Donnenberg M.S."/>
            <person name="Blattner F.R."/>
        </authorList>
    </citation>
    <scope>NUCLEOTIDE SEQUENCE [LARGE SCALE GENOMIC DNA]</scope>
    <source>
        <strain>CFT073 / ATCC 700928 / UPEC</strain>
    </source>
</reference>
<evidence type="ECO:0000250" key="1"/>
<evidence type="ECO:0000305" key="2"/>
<organism>
    <name type="scientific">Escherichia coli O6:H1 (strain CFT073 / ATCC 700928 / UPEC)</name>
    <dbReference type="NCBI Taxonomy" id="199310"/>
    <lineage>
        <taxon>Bacteria</taxon>
        <taxon>Pseudomonadati</taxon>
        <taxon>Pseudomonadota</taxon>
        <taxon>Gammaproteobacteria</taxon>
        <taxon>Enterobacterales</taxon>
        <taxon>Enterobacteriaceae</taxon>
        <taxon>Escherichia</taxon>
    </lineage>
</organism>